<comment type="function">
    <text evidence="3">Hydrolyzes p-nitrophenyl phosphate (pNPP) in vitro. Involved in the swarming motility process.</text>
</comment>
<comment type="cofactor">
    <cofactor evidence="2">
        <name>Zn(2+)</name>
        <dbReference type="ChEBI" id="CHEBI:29105"/>
    </cofactor>
    <text evidence="2">Binds 3 Zn(2+) ions per subunit.</text>
</comment>
<comment type="activity regulation">
    <text evidence="3">Activity is stimulated by YcdY.</text>
</comment>
<comment type="subunit">
    <text evidence="1 2 3">Homotrimer. Interacts with YcdY.</text>
</comment>
<comment type="interaction">
    <interactant intactId="EBI-1121626">
        <id>P75914</id>
    </interactant>
    <interactant intactId="EBI-1121634">
        <id>P75915</id>
        <label>ycdY</label>
    </interactant>
    <organismsDiffer>false</organismsDiffer>
    <experiments>2</experiments>
</comment>
<comment type="disruption phenotype">
    <text evidence="3">Mutants show no swarming ability.</text>
</comment>
<comment type="similarity">
    <text evidence="1">Belongs to the PHP family.</text>
</comment>
<name>YCDX_ECOLI</name>
<gene>
    <name evidence="1" type="primary">ycdX</name>
    <name type="ordered locus">b1034</name>
    <name type="ordered locus">JW1017</name>
</gene>
<feature type="chain" id="PRO_0000013818" description="Probable phosphatase YcdX">
    <location>
        <begin position="1"/>
        <end position="245"/>
    </location>
</feature>
<feature type="binding site" evidence="2">
    <location>
        <position position="7"/>
    </location>
    <ligand>
        <name>Zn(2+)</name>
        <dbReference type="ChEBI" id="CHEBI:29105"/>
        <label>1</label>
    </ligand>
</feature>
<feature type="binding site" evidence="2">
    <location>
        <position position="9"/>
    </location>
    <ligand>
        <name>Zn(2+)</name>
        <dbReference type="ChEBI" id="CHEBI:29105"/>
        <label>1</label>
    </ligand>
</feature>
<feature type="binding site" evidence="2">
    <location>
        <position position="15"/>
    </location>
    <ligand>
        <name>Zn(2+)</name>
        <dbReference type="ChEBI" id="CHEBI:29105"/>
        <label>2</label>
    </ligand>
</feature>
<feature type="binding site" evidence="2">
    <location>
        <position position="40"/>
    </location>
    <ligand>
        <name>Zn(2+)</name>
        <dbReference type="ChEBI" id="CHEBI:29105"/>
        <label>2</label>
    </ligand>
</feature>
<feature type="binding site" evidence="2">
    <location>
        <position position="73"/>
    </location>
    <ligand>
        <name>Zn(2+)</name>
        <dbReference type="ChEBI" id="CHEBI:29105"/>
        <label>1</label>
    </ligand>
</feature>
<feature type="binding site" evidence="2">
    <location>
        <position position="73"/>
    </location>
    <ligand>
        <name>Zn(2+)</name>
        <dbReference type="ChEBI" id="CHEBI:29105"/>
        <label>3</label>
    </ligand>
</feature>
<feature type="binding site" evidence="2">
    <location>
        <position position="101"/>
    </location>
    <ligand>
        <name>Zn(2+)</name>
        <dbReference type="ChEBI" id="CHEBI:29105"/>
        <label>3</label>
    </ligand>
</feature>
<feature type="binding site" evidence="2">
    <location>
        <position position="131"/>
    </location>
    <ligand>
        <name>Zn(2+)</name>
        <dbReference type="ChEBI" id="CHEBI:29105"/>
        <label>3</label>
    </ligand>
</feature>
<feature type="binding site" evidence="2">
    <location>
        <position position="192"/>
    </location>
    <ligand>
        <name>Zn(2+)</name>
        <dbReference type="ChEBI" id="CHEBI:29105"/>
        <label>1</label>
    </ligand>
</feature>
<feature type="binding site" evidence="2">
    <location>
        <position position="194"/>
    </location>
    <ligand>
        <name>Zn(2+)</name>
        <dbReference type="ChEBI" id="CHEBI:29105"/>
        <label>2</label>
    </ligand>
</feature>
<feature type="helix" evidence="4">
    <location>
        <begin position="20"/>
        <end position="30"/>
    </location>
</feature>
<feature type="strand" evidence="4">
    <location>
        <begin position="34"/>
        <end position="40"/>
    </location>
</feature>
<feature type="helix" evidence="4">
    <location>
        <begin position="51"/>
        <end position="54"/>
    </location>
</feature>
<feature type="helix" evidence="4">
    <location>
        <begin position="55"/>
        <end position="58"/>
    </location>
</feature>
<feature type="strand" evidence="4">
    <location>
        <begin position="61"/>
        <end position="63"/>
    </location>
</feature>
<feature type="strand" evidence="4">
    <location>
        <begin position="66"/>
        <end position="76"/>
    </location>
</feature>
<feature type="helix" evidence="4">
    <location>
        <begin position="87"/>
        <end position="92"/>
    </location>
</feature>
<feature type="strand" evidence="4">
    <location>
        <begin position="94"/>
        <end position="99"/>
    </location>
</feature>
<feature type="turn" evidence="4">
    <location>
        <begin position="102"/>
        <end position="104"/>
    </location>
</feature>
<feature type="helix" evidence="4">
    <location>
        <begin position="110"/>
        <end position="122"/>
    </location>
</feature>
<feature type="strand" evidence="4">
    <location>
        <begin position="127"/>
        <end position="129"/>
    </location>
</feature>
<feature type="helix" evidence="4">
    <location>
        <begin position="141"/>
        <end position="151"/>
    </location>
</feature>
<feature type="strand" evidence="4">
    <location>
        <begin position="154"/>
        <end position="158"/>
    </location>
</feature>
<feature type="helix" evidence="4">
    <location>
        <begin position="173"/>
        <end position="183"/>
    </location>
</feature>
<feature type="strand" evidence="4">
    <location>
        <begin position="187"/>
        <end position="190"/>
    </location>
</feature>
<feature type="strand" evidence="4">
    <location>
        <begin position="193"/>
        <end position="195"/>
    </location>
</feature>
<feature type="helix" evidence="4">
    <location>
        <begin position="196"/>
        <end position="198"/>
    </location>
</feature>
<feature type="helix" evidence="4">
    <location>
        <begin position="203"/>
        <end position="211"/>
    </location>
</feature>
<feature type="helix" evidence="4">
    <location>
        <begin position="216"/>
        <end position="218"/>
    </location>
</feature>
<feature type="helix" evidence="4">
    <location>
        <begin position="220"/>
        <end position="222"/>
    </location>
</feature>
<feature type="helix" evidence="4">
    <location>
        <begin position="224"/>
        <end position="233"/>
    </location>
</feature>
<feature type="helix" evidence="4">
    <location>
        <begin position="240"/>
        <end position="242"/>
    </location>
</feature>
<protein>
    <recommendedName>
        <fullName evidence="1">Probable phosphatase YcdX</fullName>
        <ecNumber evidence="1">3.1.3.-</ecNumber>
    </recommendedName>
</protein>
<evidence type="ECO:0000255" key="1">
    <source>
        <dbReference type="HAMAP-Rule" id="MF_01561"/>
    </source>
</evidence>
<evidence type="ECO:0000269" key="2">
    <source>
    </source>
</evidence>
<evidence type="ECO:0000269" key="3">
    <source>
    </source>
</evidence>
<evidence type="ECO:0007829" key="4">
    <source>
        <dbReference type="PDB" id="1M65"/>
    </source>
</evidence>
<reference key="1">
    <citation type="journal article" date="1996" name="DNA Res.">
        <title>A 718-kb DNA sequence of the Escherichia coli K-12 genome corresponding to the 12.7-28.0 min region on the linkage map.</title>
        <authorList>
            <person name="Oshima T."/>
            <person name="Aiba H."/>
            <person name="Baba T."/>
            <person name="Fujita K."/>
            <person name="Hayashi K."/>
            <person name="Honjo A."/>
            <person name="Ikemoto K."/>
            <person name="Inada T."/>
            <person name="Itoh T."/>
            <person name="Kajihara M."/>
            <person name="Kanai K."/>
            <person name="Kashimoto K."/>
            <person name="Kimura S."/>
            <person name="Kitagawa M."/>
            <person name="Makino K."/>
            <person name="Masuda S."/>
            <person name="Miki T."/>
            <person name="Mizobuchi K."/>
            <person name="Mori H."/>
            <person name="Motomura K."/>
            <person name="Nakamura Y."/>
            <person name="Nashimoto H."/>
            <person name="Nishio Y."/>
            <person name="Saito N."/>
            <person name="Sampei G."/>
            <person name="Seki Y."/>
            <person name="Tagami H."/>
            <person name="Takemoto K."/>
            <person name="Wada C."/>
            <person name="Yamamoto Y."/>
            <person name="Yano M."/>
            <person name="Horiuchi T."/>
        </authorList>
    </citation>
    <scope>NUCLEOTIDE SEQUENCE [LARGE SCALE GENOMIC DNA]</scope>
    <source>
        <strain>K12 / W3110 / ATCC 27325 / DSM 5911</strain>
    </source>
</reference>
<reference key="2">
    <citation type="journal article" date="1997" name="Science">
        <title>The complete genome sequence of Escherichia coli K-12.</title>
        <authorList>
            <person name="Blattner F.R."/>
            <person name="Plunkett G. III"/>
            <person name="Bloch C.A."/>
            <person name="Perna N.T."/>
            <person name="Burland V."/>
            <person name="Riley M."/>
            <person name="Collado-Vides J."/>
            <person name="Glasner J.D."/>
            <person name="Rode C.K."/>
            <person name="Mayhew G.F."/>
            <person name="Gregor J."/>
            <person name="Davis N.W."/>
            <person name="Kirkpatrick H.A."/>
            <person name="Goeden M.A."/>
            <person name="Rose D.J."/>
            <person name="Mau B."/>
            <person name="Shao Y."/>
        </authorList>
    </citation>
    <scope>NUCLEOTIDE SEQUENCE [LARGE SCALE GENOMIC DNA]</scope>
    <source>
        <strain>K12 / MG1655 / ATCC 47076</strain>
    </source>
</reference>
<reference key="3">
    <citation type="journal article" date="2006" name="Mol. Syst. Biol.">
        <title>Highly accurate genome sequences of Escherichia coli K-12 strains MG1655 and W3110.</title>
        <authorList>
            <person name="Hayashi K."/>
            <person name="Morooka N."/>
            <person name="Yamamoto Y."/>
            <person name="Fujita K."/>
            <person name="Isono K."/>
            <person name="Choi S."/>
            <person name="Ohtsubo E."/>
            <person name="Baba T."/>
            <person name="Wanner B.L."/>
            <person name="Mori H."/>
            <person name="Horiuchi T."/>
        </authorList>
    </citation>
    <scope>NUCLEOTIDE SEQUENCE [LARGE SCALE GENOMIC DNA]</scope>
    <source>
        <strain>K12 / W3110 / ATCC 27325 / DSM 5911</strain>
    </source>
</reference>
<reference key="4">
    <citation type="journal article" date="2011" name="J. Bacteriol.">
        <title>YcdY protein of Escherichia coli, an atypical member of the TorD chaperone family.</title>
        <authorList>
            <person name="Redelberger D."/>
            <person name="Seduk F."/>
            <person name="Genest O."/>
            <person name="Mejean V."/>
            <person name="Leimkuhler S."/>
            <person name="Iobbi-Nivol C."/>
        </authorList>
    </citation>
    <scope>FUNCTION</scope>
    <scope>ACTIVITY REGULATION</scope>
    <scope>INTERACTION WITH YCDY</scope>
    <scope>DISRUPTION PHENOTYPE</scope>
    <scope>IDENTIFICATION BY MASS SPECTROMETRY</scope>
    <source>
        <strain>K12 / BW25113</strain>
    </source>
</reference>
<reference key="5">
    <citation type="journal article" date="2003" name="Proteins">
        <title>Crystal structure of the Escherichia coli YcdX protein reveals a trinuclear zinc active site.</title>
        <authorList>
            <person name="Teplyakov A."/>
            <person name="Obmolova G."/>
            <person name="Khil P.P."/>
            <person name="Howard A.J."/>
            <person name="Camerini-Otero R.D."/>
            <person name="Gilliland G.L."/>
        </authorList>
    </citation>
    <scope>X-RAY CRYSTALLOGRAPHY (1.57 ANGSTROMS) IN COMPLEX WITH ZINC IONS</scope>
    <scope>COFACTOR</scope>
    <scope>SUBUNIT</scope>
</reference>
<sequence>MYPVDLHMHTVASTHAYSTLSDYIAQAKQKGIKLFAITDHGPDMEDAPHHWHFINMRIWPRVVDGVGILRGIEANIKNVDGEIDCSGKMFDSLDLIIAGFHEPVFAPHDKATNTQAMIATIASGNVHIISHPGNPKYEIDVKAVAEAAAKHQVALEINNSSFLHSRKGSEDNCREVAAAVRDAGGWVALGSDSHTAFTMGEFEECLKILDAVDFPPERILNVSPRRLLNFLESRGMAPIAEFADL</sequence>
<organism>
    <name type="scientific">Escherichia coli (strain K12)</name>
    <dbReference type="NCBI Taxonomy" id="83333"/>
    <lineage>
        <taxon>Bacteria</taxon>
        <taxon>Pseudomonadati</taxon>
        <taxon>Pseudomonadota</taxon>
        <taxon>Gammaproteobacteria</taxon>
        <taxon>Enterobacterales</taxon>
        <taxon>Enterobacteriaceae</taxon>
        <taxon>Escherichia</taxon>
    </lineage>
</organism>
<proteinExistence type="evidence at protein level"/>
<accession>P75914</accession>
<keyword id="KW-0002">3D-structure</keyword>
<keyword id="KW-0378">Hydrolase</keyword>
<keyword id="KW-0479">Metal-binding</keyword>
<keyword id="KW-1185">Reference proteome</keyword>
<keyword id="KW-0862">Zinc</keyword>
<dbReference type="EC" id="3.1.3.-" evidence="1"/>
<dbReference type="EMBL" id="U00096">
    <property type="protein sequence ID" value="AAC74118.1"/>
    <property type="molecule type" value="Genomic_DNA"/>
</dbReference>
<dbReference type="EMBL" id="AP009048">
    <property type="protein sequence ID" value="BAA35815.1"/>
    <property type="molecule type" value="Genomic_DNA"/>
</dbReference>
<dbReference type="PIR" id="G64845">
    <property type="entry name" value="G64845"/>
</dbReference>
<dbReference type="RefSeq" id="NP_415552.1">
    <property type="nucleotide sequence ID" value="NC_000913.3"/>
</dbReference>
<dbReference type="RefSeq" id="WP_000283667.1">
    <property type="nucleotide sequence ID" value="NZ_SSZK01000090.1"/>
</dbReference>
<dbReference type="PDB" id="1M65">
    <property type="method" value="X-ray"/>
    <property type="resolution" value="1.57 A"/>
    <property type="chains" value="A=1-245"/>
</dbReference>
<dbReference type="PDB" id="1M68">
    <property type="method" value="X-ray"/>
    <property type="resolution" value="2.30 A"/>
    <property type="chains" value="A=1-245"/>
</dbReference>
<dbReference type="PDB" id="1PB0">
    <property type="method" value="X-ray"/>
    <property type="resolution" value="1.95 A"/>
    <property type="chains" value="A/B/C=1-245"/>
</dbReference>
<dbReference type="PDBsum" id="1M65"/>
<dbReference type="PDBsum" id="1M68"/>
<dbReference type="PDBsum" id="1PB0"/>
<dbReference type="SMR" id="P75914"/>
<dbReference type="BioGRID" id="4260061">
    <property type="interactions" value="157"/>
</dbReference>
<dbReference type="FunCoup" id="P75914">
    <property type="interactions" value="67"/>
</dbReference>
<dbReference type="IntAct" id="P75914">
    <property type="interactions" value="8"/>
</dbReference>
<dbReference type="STRING" id="511145.b1034"/>
<dbReference type="DrugBank" id="DB01942">
    <property type="generic name" value="Formic acid"/>
</dbReference>
<dbReference type="jPOST" id="P75914"/>
<dbReference type="PaxDb" id="511145-b1034"/>
<dbReference type="EnsemblBacteria" id="AAC74118">
    <property type="protein sequence ID" value="AAC74118"/>
    <property type="gene ID" value="b1034"/>
</dbReference>
<dbReference type="GeneID" id="75203622"/>
<dbReference type="GeneID" id="948477"/>
<dbReference type="KEGG" id="ecj:JW1017"/>
<dbReference type="KEGG" id="eco:b1034"/>
<dbReference type="KEGG" id="ecoc:C3026_06300"/>
<dbReference type="PATRIC" id="fig|1411691.4.peg.1237"/>
<dbReference type="EchoBASE" id="EB3629"/>
<dbReference type="eggNOG" id="COG1387">
    <property type="taxonomic scope" value="Bacteria"/>
</dbReference>
<dbReference type="HOGENOM" id="CLU_061999_0_1_6"/>
<dbReference type="InParanoid" id="P75914"/>
<dbReference type="OMA" id="SEPNCRA"/>
<dbReference type="OrthoDB" id="9808747at2"/>
<dbReference type="PhylomeDB" id="P75914"/>
<dbReference type="BioCyc" id="EcoCyc:G6540-MONOMER"/>
<dbReference type="EvolutionaryTrace" id="P75914"/>
<dbReference type="PRO" id="PR:P75914"/>
<dbReference type="Proteomes" id="UP000000625">
    <property type="component" value="Chromosome"/>
</dbReference>
<dbReference type="GO" id="GO:0005829">
    <property type="term" value="C:cytosol"/>
    <property type="evidence" value="ECO:0000314"/>
    <property type="project" value="EcoCyc"/>
</dbReference>
<dbReference type="GO" id="GO:0042802">
    <property type="term" value="F:identical protein binding"/>
    <property type="evidence" value="ECO:0000314"/>
    <property type="project" value="EcoCyc"/>
</dbReference>
<dbReference type="GO" id="GO:0016791">
    <property type="term" value="F:phosphatase activity"/>
    <property type="evidence" value="ECO:0007669"/>
    <property type="project" value="UniProtKB-UniRule"/>
</dbReference>
<dbReference type="GO" id="GO:0042578">
    <property type="term" value="F:phosphoric ester hydrolase activity"/>
    <property type="evidence" value="ECO:0000314"/>
    <property type="project" value="EcoCyc"/>
</dbReference>
<dbReference type="GO" id="GO:0008270">
    <property type="term" value="F:zinc ion binding"/>
    <property type="evidence" value="ECO:0000314"/>
    <property type="project" value="EcoCyc"/>
</dbReference>
<dbReference type="GO" id="GO:0071978">
    <property type="term" value="P:bacterial-type flagellum-dependent swarming motility"/>
    <property type="evidence" value="ECO:0000315"/>
    <property type="project" value="EcoCyc"/>
</dbReference>
<dbReference type="CDD" id="cd07437">
    <property type="entry name" value="PHP_HisPPase_Ycdx_like"/>
    <property type="match status" value="1"/>
</dbReference>
<dbReference type="FunFam" id="3.20.20.140:FF:000008">
    <property type="entry name" value="Probable phosphatase YcdX"/>
    <property type="match status" value="1"/>
</dbReference>
<dbReference type="Gene3D" id="3.20.20.140">
    <property type="entry name" value="Metal-dependent hydrolases"/>
    <property type="match status" value="1"/>
</dbReference>
<dbReference type="HAMAP" id="MF_01561">
    <property type="entry name" value="YcdX_phosphat"/>
    <property type="match status" value="1"/>
</dbReference>
<dbReference type="InterPro" id="IPR023710">
    <property type="entry name" value="Phosphatase_YcdX_put"/>
</dbReference>
<dbReference type="InterPro" id="IPR004013">
    <property type="entry name" value="PHP_dom"/>
</dbReference>
<dbReference type="InterPro" id="IPR050243">
    <property type="entry name" value="PHP_phosphatase"/>
</dbReference>
<dbReference type="InterPro" id="IPR003141">
    <property type="entry name" value="Pol/His_phosphatase_N"/>
</dbReference>
<dbReference type="InterPro" id="IPR016195">
    <property type="entry name" value="Pol/histidinol_Pase-like"/>
</dbReference>
<dbReference type="NCBIfam" id="NF006702">
    <property type="entry name" value="PRK09248.1"/>
    <property type="match status" value="1"/>
</dbReference>
<dbReference type="PANTHER" id="PTHR36928">
    <property type="entry name" value="PHOSPHATASE YCDX-RELATED"/>
    <property type="match status" value="1"/>
</dbReference>
<dbReference type="PANTHER" id="PTHR36928:SF1">
    <property type="entry name" value="PHOSPHATASE YCDX-RELATED"/>
    <property type="match status" value="1"/>
</dbReference>
<dbReference type="Pfam" id="PF02811">
    <property type="entry name" value="PHP"/>
    <property type="match status" value="1"/>
</dbReference>
<dbReference type="SMART" id="SM00481">
    <property type="entry name" value="POLIIIAc"/>
    <property type="match status" value="1"/>
</dbReference>
<dbReference type="SUPFAM" id="SSF89550">
    <property type="entry name" value="PHP domain-like"/>
    <property type="match status" value="1"/>
</dbReference>